<organism>
    <name type="scientific">Bacillus subtilis (strain 168)</name>
    <dbReference type="NCBI Taxonomy" id="224308"/>
    <lineage>
        <taxon>Bacteria</taxon>
        <taxon>Bacillati</taxon>
        <taxon>Bacillota</taxon>
        <taxon>Bacilli</taxon>
        <taxon>Bacillales</taxon>
        <taxon>Bacillaceae</taxon>
        <taxon>Bacillus</taxon>
    </lineage>
</organism>
<evidence type="ECO:0000250" key="1"/>
<evidence type="ECO:0000305" key="2"/>
<evidence type="ECO:0007829" key="3">
    <source>
        <dbReference type="PDB" id="5DDT"/>
    </source>
</evidence>
<protein>
    <recommendedName>
        <fullName>2-C-methyl-D-erythritol 4-phosphate cytidylyltransferase</fullName>
        <ecNumber>2.7.7.60</ecNumber>
    </recommendedName>
    <alternativeName>
        <fullName>4-diphosphocytidyl-2C-methyl-D-erythritol synthase</fullName>
    </alternativeName>
    <alternativeName>
        <fullName>MEP cytidylyltransferase</fullName>
        <shortName>MCT</shortName>
    </alternativeName>
</protein>
<dbReference type="EC" id="2.7.7.60"/>
<dbReference type="EMBL" id="L14580">
    <property type="protein sequence ID" value="AAA21794.1"/>
    <property type="molecule type" value="Genomic_DNA"/>
</dbReference>
<dbReference type="EMBL" id="D26185">
    <property type="protein sequence ID" value="BAA05324.1"/>
    <property type="molecule type" value="Genomic_DNA"/>
</dbReference>
<dbReference type="EMBL" id="AL009126">
    <property type="protein sequence ID" value="CAB11866.1"/>
    <property type="molecule type" value="Genomic_DNA"/>
</dbReference>
<dbReference type="PIR" id="S66119">
    <property type="entry name" value="S66119"/>
</dbReference>
<dbReference type="RefSeq" id="NP_387971.1">
    <property type="nucleotide sequence ID" value="NC_000964.3"/>
</dbReference>
<dbReference type="RefSeq" id="WP_003235019.1">
    <property type="nucleotide sequence ID" value="NZ_OZ025638.1"/>
</dbReference>
<dbReference type="PDB" id="5DDT">
    <property type="method" value="X-ray"/>
    <property type="resolution" value="1.80 A"/>
    <property type="chains" value="A/B=1-232"/>
</dbReference>
<dbReference type="PDB" id="5DDV">
    <property type="method" value="X-ray"/>
    <property type="resolution" value="2.30 A"/>
    <property type="chains" value="A=1-232"/>
</dbReference>
<dbReference type="PDB" id="5HS2">
    <property type="method" value="X-ray"/>
    <property type="resolution" value="1.90 A"/>
    <property type="chains" value="A/B=1-232"/>
</dbReference>
<dbReference type="PDBsum" id="5DDT"/>
<dbReference type="PDBsum" id="5DDV"/>
<dbReference type="PDBsum" id="5HS2"/>
<dbReference type="SMR" id="Q06755"/>
<dbReference type="FunCoup" id="Q06755">
    <property type="interactions" value="372"/>
</dbReference>
<dbReference type="STRING" id="224308.BSU00900"/>
<dbReference type="PaxDb" id="224308-BSU00900"/>
<dbReference type="EnsemblBacteria" id="CAB11866">
    <property type="protein sequence ID" value="CAB11866"/>
    <property type="gene ID" value="BSU_00900"/>
</dbReference>
<dbReference type="GeneID" id="936855"/>
<dbReference type="KEGG" id="bsu:BSU00900"/>
<dbReference type="PATRIC" id="fig|224308.179.peg.91"/>
<dbReference type="eggNOG" id="COG1211">
    <property type="taxonomic scope" value="Bacteria"/>
</dbReference>
<dbReference type="InParanoid" id="Q06755"/>
<dbReference type="OrthoDB" id="9806837at2"/>
<dbReference type="PhylomeDB" id="Q06755"/>
<dbReference type="BioCyc" id="BSUB:BSU00900-MONOMER"/>
<dbReference type="BRENDA" id="2.7.7.60">
    <property type="organism ID" value="658"/>
</dbReference>
<dbReference type="UniPathway" id="UPA00056">
    <property type="reaction ID" value="UER00093"/>
</dbReference>
<dbReference type="Proteomes" id="UP000001570">
    <property type="component" value="Chromosome"/>
</dbReference>
<dbReference type="GO" id="GO:0050518">
    <property type="term" value="F:2-C-methyl-D-erythritol 4-phosphate cytidylyltransferase activity"/>
    <property type="evidence" value="ECO:0000318"/>
    <property type="project" value="GO_Central"/>
</dbReference>
<dbReference type="GO" id="GO:0019288">
    <property type="term" value="P:isopentenyl diphosphate biosynthetic process, methylerythritol 4-phosphate pathway"/>
    <property type="evidence" value="ECO:0007669"/>
    <property type="project" value="UniProtKB-UniRule"/>
</dbReference>
<dbReference type="CDD" id="cd02516">
    <property type="entry name" value="CDP-ME_synthetase"/>
    <property type="match status" value="1"/>
</dbReference>
<dbReference type="FunFam" id="3.90.550.10:FF:000003">
    <property type="entry name" value="2-C-methyl-D-erythritol 4-phosphate cytidylyltransferase"/>
    <property type="match status" value="1"/>
</dbReference>
<dbReference type="Gene3D" id="3.90.550.10">
    <property type="entry name" value="Spore Coat Polysaccharide Biosynthesis Protein SpsA, Chain A"/>
    <property type="match status" value="1"/>
</dbReference>
<dbReference type="HAMAP" id="MF_00108">
    <property type="entry name" value="IspD"/>
    <property type="match status" value="1"/>
</dbReference>
<dbReference type="InterPro" id="IPR001228">
    <property type="entry name" value="IspD"/>
</dbReference>
<dbReference type="InterPro" id="IPR034683">
    <property type="entry name" value="IspD/TarI"/>
</dbReference>
<dbReference type="InterPro" id="IPR050088">
    <property type="entry name" value="IspD/TarI_cytidylyltransf_bact"/>
</dbReference>
<dbReference type="InterPro" id="IPR018294">
    <property type="entry name" value="ISPD_synthase_CS"/>
</dbReference>
<dbReference type="InterPro" id="IPR029044">
    <property type="entry name" value="Nucleotide-diphossugar_trans"/>
</dbReference>
<dbReference type="NCBIfam" id="TIGR00453">
    <property type="entry name" value="ispD"/>
    <property type="match status" value="1"/>
</dbReference>
<dbReference type="PANTHER" id="PTHR32125">
    <property type="entry name" value="2-C-METHYL-D-ERYTHRITOL 4-PHOSPHATE CYTIDYLYLTRANSFERASE, CHLOROPLASTIC"/>
    <property type="match status" value="1"/>
</dbReference>
<dbReference type="PANTHER" id="PTHR32125:SF4">
    <property type="entry name" value="2-C-METHYL-D-ERYTHRITOL 4-PHOSPHATE CYTIDYLYLTRANSFERASE, CHLOROPLASTIC"/>
    <property type="match status" value="1"/>
</dbReference>
<dbReference type="Pfam" id="PF01128">
    <property type="entry name" value="IspD"/>
    <property type="match status" value="1"/>
</dbReference>
<dbReference type="SUPFAM" id="SSF53448">
    <property type="entry name" value="Nucleotide-diphospho-sugar transferases"/>
    <property type="match status" value="1"/>
</dbReference>
<dbReference type="PROSITE" id="PS01295">
    <property type="entry name" value="ISPD"/>
    <property type="match status" value="1"/>
</dbReference>
<name>ISPD_BACSU</name>
<reference key="1">
    <citation type="journal article" date="1994" name="J. Biol. Chem.">
        <title>Clustering and co-transcription of the Bacillus subtilis genes encoding the aminoacyl-tRNA synthetases specific for glutamate and for cysteine and the first enzyme for cysteine biosynthesis.</title>
        <authorList>
            <person name="Gagnon Y."/>
            <person name="Breton R."/>
            <person name="Putzer H."/>
            <person name="Pelchat M."/>
            <person name="Grunberg-Manago M."/>
            <person name="Lapointe J."/>
        </authorList>
    </citation>
    <scope>NUCLEOTIDE SEQUENCE [GENOMIC DNA]</scope>
</reference>
<reference key="2">
    <citation type="journal article" date="1994" name="DNA Res.">
        <title>Systematic sequencing of the 180 kilobase region of the Bacillus subtilis chromosome containing the replication origin.</title>
        <authorList>
            <person name="Ogasawara N."/>
            <person name="Nakai S."/>
            <person name="Yoshikawa H."/>
        </authorList>
    </citation>
    <scope>NUCLEOTIDE SEQUENCE [GENOMIC DNA]</scope>
    <source>
        <strain>168</strain>
    </source>
</reference>
<reference key="3">
    <citation type="journal article" date="1997" name="Nature">
        <title>The complete genome sequence of the Gram-positive bacterium Bacillus subtilis.</title>
        <authorList>
            <person name="Kunst F."/>
            <person name="Ogasawara N."/>
            <person name="Moszer I."/>
            <person name="Albertini A.M."/>
            <person name="Alloni G."/>
            <person name="Azevedo V."/>
            <person name="Bertero M.G."/>
            <person name="Bessieres P."/>
            <person name="Bolotin A."/>
            <person name="Borchert S."/>
            <person name="Borriss R."/>
            <person name="Boursier L."/>
            <person name="Brans A."/>
            <person name="Braun M."/>
            <person name="Brignell S.C."/>
            <person name="Bron S."/>
            <person name="Brouillet S."/>
            <person name="Bruschi C.V."/>
            <person name="Caldwell B."/>
            <person name="Capuano V."/>
            <person name="Carter N.M."/>
            <person name="Choi S.-K."/>
            <person name="Codani J.-J."/>
            <person name="Connerton I.F."/>
            <person name="Cummings N.J."/>
            <person name="Daniel R.A."/>
            <person name="Denizot F."/>
            <person name="Devine K.M."/>
            <person name="Duesterhoeft A."/>
            <person name="Ehrlich S.D."/>
            <person name="Emmerson P.T."/>
            <person name="Entian K.-D."/>
            <person name="Errington J."/>
            <person name="Fabret C."/>
            <person name="Ferrari E."/>
            <person name="Foulger D."/>
            <person name="Fritz C."/>
            <person name="Fujita M."/>
            <person name="Fujita Y."/>
            <person name="Fuma S."/>
            <person name="Galizzi A."/>
            <person name="Galleron N."/>
            <person name="Ghim S.-Y."/>
            <person name="Glaser P."/>
            <person name="Goffeau A."/>
            <person name="Golightly E.J."/>
            <person name="Grandi G."/>
            <person name="Guiseppi G."/>
            <person name="Guy B.J."/>
            <person name="Haga K."/>
            <person name="Haiech J."/>
            <person name="Harwood C.R."/>
            <person name="Henaut A."/>
            <person name="Hilbert H."/>
            <person name="Holsappel S."/>
            <person name="Hosono S."/>
            <person name="Hullo M.-F."/>
            <person name="Itaya M."/>
            <person name="Jones L.-M."/>
            <person name="Joris B."/>
            <person name="Karamata D."/>
            <person name="Kasahara Y."/>
            <person name="Klaerr-Blanchard M."/>
            <person name="Klein C."/>
            <person name="Kobayashi Y."/>
            <person name="Koetter P."/>
            <person name="Koningstein G."/>
            <person name="Krogh S."/>
            <person name="Kumano M."/>
            <person name="Kurita K."/>
            <person name="Lapidus A."/>
            <person name="Lardinois S."/>
            <person name="Lauber J."/>
            <person name="Lazarevic V."/>
            <person name="Lee S.-M."/>
            <person name="Levine A."/>
            <person name="Liu H."/>
            <person name="Masuda S."/>
            <person name="Mauel C."/>
            <person name="Medigue C."/>
            <person name="Medina N."/>
            <person name="Mellado R.P."/>
            <person name="Mizuno M."/>
            <person name="Moestl D."/>
            <person name="Nakai S."/>
            <person name="Noback M."/>
            <person name="Noone D."/>
            <person name="O'Reilly M."/>
            <person name="Ogawa K."/>
            <person name="Ogiwara A."/>
            <person name="Oudega B."/>
            <person name="Park S.-H."/>
            <person name="Parro V."/>
            <person name="Pohl T.M."/>
            <person name="Portetelle D."/>
            <person name="Porwollik S."/>
            <person name="Prescott A.M."/>
            <person name="Presecan E."/>
            <person name="Pujic P."/>
            <person name="Purnelle B."/>
            <person name="Rapoport G."/>
            <person name="Rey M."/>
            <person name="Reynolds S."/>
            <person name="Rieger M."/>
            <person name="Rivolta C."/>
            <person name="Rocha E."/>
            <person name="Roche B."/>
            <person name="Rose M."/>
            <person name="Sadaie Y."/>
            <person name="Sato T."/>
            <person name="Scanlan E."/>
            <person name="Schleich S."/>
            <person name="Schroeter R."/>
            <person name="Scoffone F."/>
            <person name="Sekiguchi J."/>
            <person name="Sekowska A."/>
            <person name="Seror S.J."/>
            <person name="Serror P."/>
            <person name="Shin B.-S."/>
            <person name="Soldo B."/>
            <person name="Sorokin A."/>
            <person name="Tacconi E."/>
            <person name="Takagi T."/>
            <person name="Takahashi H."/>
            <person name="Takemaru K."/>
            <person name="Takeuchi M."/>
            <person name="Tamakoshi A."/>
            <person name="Tanaka T."/>
            <person name="Terpstra P."/>
            <person name="Tognoni A."/>
            <person name="Tosato V."/>
            <person name="Uchiyama S."/>
            <person name="Vandenbol M."/>
            <person name="Vannier F."/>
            <person name="Vassarotti A."/>
            <person name="Viari A."/>
            <person name="Wambutt R."/>
            <person name="Wedler E."/>
            <person name="Wedler H."/>
            <person name="Weitzenegger T."/>
            <person name="Winters P."/>
            <person name="Wipat A."/>
            <person name="Yamamoto H."/>
            <person name="Yamane K."/>
            <person name="Yasumoto K."/>
            <person name="Yata K."/>
            <person name="Yoshida K."/>
            <person name="Yoshikawa H.-F."/>
            <person name="Zumstein E."/>
            <person name="Yoshikawa H."/>
            <person name="Danchin A."/>
        </authorList>
    </citation>
    <scope>NUCLEOTIDE SEQUENCE [LARGE SCALE GENOMIC DNA]</scope>
    <source>
        <strain>168</strain>
    </source>
</reference>
<sequence>MSYDVVIPAAGQGKRMKAGRNKLFIELKGDPVIIHTLRVFDSHRQCDKIILVINEQEREHFQQLLSDYPFQTSIELVAGGDERQHSVYKGLKAVKQEKIVLVHDGARPFIKHEQIDELIAEAEQTGAAILAVPVKDTIKRVQDLQVSETIERSSLWAVQTPQAFRLSLLMKAHAEAERKGFLGTDDASLVEQMEGGSVRVVEGSYTNIKLTTPDDLTSAEAIMESESGNKHV</sequence>
<accession>Q06755</accession>
<proteinExistence type="evidence at protein level"/>
<gene>
    <name type="primary">ispD</name>
    <name type="synonym">yacM</name>
    <name type="ordered locus">BSU00900</name>
</gene>
<keyword id="KW-0002">3D-structure</keyword>
<keyword id="KW-0414">Isoprene biosynthesis</keyword>
<keyword id="KW-0548">Nucleotidyltransferase</keyword>
<keyword id="KW-1185">Reference proteome</keyword>
<keyword id="KW-0808">Transferase</keyword>
<comment type="function">
    <text evidence="1">Catalyzes the formation of 4-diphosphocytidyl-2-C-methyl-D-erythritol from CTP and 2-C-methyl-D-erythritol 4-phosphate (MEP).</text>
</comment>
<comment type="catalytic activity">
    <reaction>
        <text>2-C-methyl-D-erythritol 4-phosphate + CTP + H(+) = 4-CDP-2-C-methyl-D-erythritol + diphosphate</text>
        <dbReference type="Rhea" id="RHEA:13429"/>
        <dbReference type="ChEBI" id="CHEBI:15378"/>
        <dbReference type="ChEBI" id="CHEBI:33019"/>
        <dbReference type="ChEBI" id="CHEBI:37563"/>
        <dbReference type="ChEBI" id="CHEBI:57823"/>
        <dbReference type="ChEBI" id="CHEBI:58262"/>
        <dbReference type="EC" id="2.7.7.60"/>
    </reaction>
</comment>
<comment type="pathway">
    <text>Isoprenoid biosynthesis; isopentenyl diphosphate biosynthesis via DXP pathway; isopentenyl diphosphate from 1-deoxy-D-xylulose 5-phosphate: step 2/6.</text>
</comment>
<comment type="similarity">
    <text evidence="2">Belongs to the IspD/TarI cytidylyltransferase family. IspD subfamily.</text>
</comment>
<feature type="chain" id="PRO_0000075551" description="2-C-methyl-D-erythritol 4-phosphate cytidylyltransferase">
    <location>
        <begin position="1"/>
        <end position="232"/>
    </location>
</feature>
<feature type="site" description="Transition state stabilizer" evidence="1">
    <location>
        <position position="15"/>
    </location>
</feature>
<feature type="site" description="Transition state stabilizer" evidence="1">
    <location>
        <position position="22"/>
    </location>
</feature>
<feature type="site" description="Positions MEP for the nucleophilic attack" evidence="1">
    <location>
        <position position="152"/>
    </location>
</feature>
<feature type="site" description="Positions MEP for the nucleophilic attack" evidence="1">
    <location>
        <position position="209"/>
    </location>
</feature>
<feature type="sequence conflict" description="In Ref. 1; AAA21794." evidence="2" ref="1">
    <original>E</original>
    <variation>D</variation>
    <location>
        <position position="57"/>
    </location>
</feature>
<feature type="strand" evidence="3">
    <location>
        <begin position="3"/>
        <end position="9"/>
    </location>
</feature>
<feature type="strand" evidence="3">
    <location>
        <begin position="12"/>
        <end position="14"/>
    </location>
</feature>
<feature type="helix" evidence="3">
    <location>
        <begin position="22"/>
        <end position="24"/>
    </location>
</feature>
<feature type="helix" evidence="3">
    <location>
        <begin position="32"/>
        <end position="42"/>
    </location>
</feature>
<feature type="strand" evidence="3">
    <location>
        <begin position="46"/>
        <end position="53"/>
    </location>
</feature>
<feature type="helix" evidence="3">
    <location>
        <begin position="55"/>
        <end position="57"/>
    </location>
</feature>
<feature type="helix" evidence="3">
    <location>
        <begin position="58"/>
        <end position="67"/>
    </location>
</feature>
<feature type="strand" evidence="3">
    <location>
        <begin position="71"/>
        <end position="78"/>
    </location>
</feature>
<feature type="helix" evidence="3">
    <location>
        <begin position="83"/>
        <end position="92"/>
    </location>
</feature>
<feature type="strand" evidence="3">
    <location>
        <begin position="96"/>
        <end position="102"/>
    </location>
</feature>
<feature type="helix" evidence="3">
    <location>
        <begin position="112"/>
        <end position="125"/>
    </location>
</feature>
<feature type="strand" evidence="3">
    <location>
        <begin position="126"/>
        <end position="133"/>
    </location>
</feature>
<feature type="strand" evidence="3">
    <location>
        <begin position="138"/>
        <end position="142"/>
    </location>
</feature>
<feature type="strand" evidence="3">
    <location>
        <begin position="145"/>
        <end position="149"/>
    </location>
</feature>
<feature type="strand" evidence="3">
    <location>
        <begin position="155"/>
        <end position="165"/>
    </location>
</feature>
<feature type="helix" evidence="3">
    <location>
        <begin position="166"/>
        <end position="179"/>
    </location>
</feature>
<feature type="helix" evidence="3">
    <location>
        <begin position="186"/>
        <end position="192"/>
    </location>
</feature>
<feature type="strand" evidence="3">
    <location>
        <begin position="199"/>
        <end position="202"/>
    </location>
</feature>
<feature type="helix" evidence="3">
    <location>
        <begin position="213"/>
        <end position="226"/>
    </location>
</feature>